<name>LECM_CERRY</name>
<organism>
    <name type="scientific">Cerberus rynchops</name>
    <name type="common">Dog-faced water snake</name>
    <dbReference type="NCBI Taxonomy" id="46267"/>
    <lineage>
        <taxon>Eukaryota</taxon>
        <taxon>Metazoa</taxon>
        <taxon>Chordata</taxon>
        <taxon>Craniata</taxon>
        <taxon>Vertebrata</taxon>
        <taxon>Euteleostomi</taxon>
        <taxon>Lepidosauria</taxon>
        <taxon>Squamata</taxon>
        <taxon>Bifurcata</taxon>
        <taxon>Unidentata</taxon>
        <taxon>Episquamata</taxon>
        <taxon>Toxicofera</taxon>
        <taxon>Serpentes</taxon>
        <taxon>Colubroidea</taxon>
        <taxon>Homalopsidae</taxon>
        <taxon>Cerberus</taxon>
    </lineage>
</organism>
<comment type="function">
    <text evidence="1">Mannose-binding lectin which recognizes specific carbohydrate structures and agglutinates a variety of animal cells by binding to cell-surface glycoproteins and glycolipids. May be a calcium-dependent lectin (By similarity).</text>
</comment>
<comment type="subcellular location">
    <subcellularLocation>
        <location>Secreted</location>
    </subcellularLocation>
</comment>
<comment type="tissue specificity">
    <text>Expressed by the venom gland.</text>
</comment>
<comment type="similarity">
    <text evidence="4">Belongs to the true venom lectin family.</text>
</comment>
<evidence type="ECO:0000250" key="1"/>
<evidence type="ECO:0000255" key="2"/>
<evidence type="ECO:0000255" key="3">
    <source>
        <dbReference type="PROSITE-ProRule" id="PRU00040"/>
    </source>
</evidence>
<evidence type="ECO:0000305" key="4"/>
<dbReference type="EMBL" id="GU065322">
    <property type="protein sequence ID" value="ADJ51061.1"/>
    <property type="molecule type" value="mRNA"/>
</dbReference>
<dbReference type="SMR" id="D8VNS6"/>
<dbReference type="GO" id="GO:0005576">
    <property type="term" value="C:extracellular region"/>
    <property type="evidence" value="ECO:0007669"/>
    <property type="project" value="UniProtKB-SubCell"/>
</dbReference>
<dbReference type="GO" id="GO:0030246">
    <property type="term" value="F:carbohydrate binding"/>
    <property type="evidence" value="ECO:0007669"/>
    <property type="project" value="UniProtKB-KW"/>
</dbReference>
<dbReference type="GO" id="GO:0046872">
    <property type="term" value="F:metal ion binding"/>
    <property type="evidence" value="ECO:0007669"/>
    <property type="project" value="UniProtKB-KW"/>
</dbReference>
<dbReference type="GO" id="GO:0090729">
    <property type="term" value="F:toxin activity"/>
    <property type="evidence" value="ECO:0007669"/>
    <property type="project" value="UniProtKB-KW"/>
</dbReference>
<dbReference type="FunFam" id="3.10.100.10:FF:000015">
    <property type="entry name" value="C-type lectin Cal"/>
    <property type="match status" value="1"/>
</dbReference>
<dbReference type="Gene3D" id="3.10.100.10">
    <property type="entry name" value="Mannose-Binding Protein A, subunit A"/>
    <property type="match status" value="1"/>
</dbReference>
<dbReference type="InterPro" id="IPR001304">
    <property type="entry name" value="C-type_lectin-like"/>
</dbReference>
<dbReference type="InterPro" id="IPR016186">
    <property type="entry name" value="C-type_lectin-like/link_sf"/>
</dbReference>
<dbReference type="InterPro" id="IPR050111">
    <property type="entry name" value="C-type_lectin/snaclec_domain"/>
</dbReference>
<dbReference type="InterPro" id="IPR018378">
    <property type="entry name" value="C-type_lectin_CS"/>
</dbReference>
<dbReference type="InterPro" id="IPR016187">
    <property type="entry name" value="CTDL_fold"/>
</dbReference>
<dbReference type="PANTHER" id="PTHR22803">
    <property type="entry name" value="MANNOSE, PHOSPHOLIPASE, LECTIN RECEPTOR RELATED"/>
    <property type="match status" value="1"/>
</dbReference>
<dbReference type="Pfam" id="PF00059">
    <property type="entry name" value="Lectin_C"/>
    <property type="match status" value="1"/>
</dbReference>
<dbReference type="PRINTS" id="PR01504">
    <property type="entry name" value="PNCREATITSAP"/>
</dbReference>
<dbReference type="SMART" id="SM00034">
    <property type="entry name" value="CLECT"/>
    <property type="match status" value="1"/>
</dbReference>
<dbReference type="SUPFAM" id="SSF56436">
    <property type="entry name" value="C-type lectin-like"/>
    <property type="match status" value="1"/>
</dbReference>
<dbReference type="PROSITE" id="PS00615">
    <property type="entry name" value="C_TYPE_LECTIN_1"/>
    <property type="match status" value="1"/>
</dbReference>
<dbReference type="PROSITE" id="PS50041">
    <property type="entry name" value="C_TYPE_LECTIN_2"/>
    <property type="match status" value="1"/>
</dbReference>
<keyword id="KW-0106">Calcium</keyword>
<keyword id="KW-1015">Disulfide bond</keyword>
<keyword id="KW-0430">Lectin</keyword>
<keyword id="KW-0479">Metal-binding</keyword>
<keyword id="KW-0964">Secreted</keyword>
<keyword id="KW-0732">Signal</keyword>
<keyword id="KW-0800">Toxin</keyword>
<sequence length="158" mass="18112">MWQFTVVSLGWLAVFLSLSGAKGNSCPASWISRNGVCNKLFPDRKTWLEAEMYCRALKPGGHLASLHKDSDSTVLAWYISDHFKGAGHVWIGLRDTNKKRSWKWSDRTSTNYFSWNQGEPNNVQDNENCVHLWAPSGYLKWNDEPCASLHPFICQYKL</sequence>
<reference key="1">
    <citation type="journal article" date="2010" name="J. Proteome Res.">
        <title>Identification of a novel family of snake venom proteins Veficolins from Cerberus rynchops using a venom gland transcriptomics and proteomics approach.</title>
        <authorList>
            <person name="Ompraba G."/>
            <person name="Chapeaurouge A."/>
            <person name="Doley R."/>
            <person name="Devi K.R."/>
            <person name="Padmanaban P."/>
            <person name="Venkatraman C."/>
            <person name="Velmurugan D."/>
            <person name="Lin Q."/>
            <person name="Kini R.M."/>
        </authorList>
    </citation>
    <scope>NUCLEOTIDE SEQUENCE [MRNA]</scope>
    <scope>IDENTIFICATION BY MASS SPECTROMETRY</scope>
    <scope>3D-STRUCTURE MODELING</scope>
    <source>
        <tissue>Venom</tissue>
        <tissue>Venom gland</tissue>
    </source>
</reference>
<feature type="signal peptide" evidence="2">
    <location>
        <begin position="1"/>
        <end position="23"/>
    </location>
</feature>
<feature type="chain" id="PRO_0000414914" description="C-type lectin">
    <location>
        <begin position="24"/>
        <end position="158"/>
    </location>
</feature>
<feature type="domain" description="C-type lectin" evidence="3">
    <location>
        <begin position="33"/>
        <end position="155"/>
    </location>
</feature>
<feature type="short sequence motif" description="Mannose-binding">
    <location>
        <begin position="119"/>
        <end position="121"/>
    </location>
</feature>
<feature type="binding site" evidence="1">
    <location>
        <position position="127"/>
    </location>
    <ligand>
        <name>Ca(2+)</name>
        <dbReference type="ChEBI" id="CHEBI:29108"/>
    </ligand>
</feature>
<feature type="binding site" evidence="1">
    <location>
        <position position="142"/>
    </location>
    <ligand>
        <name>Ca(2+)</name>
        <dbReference type="ChEBI" id="CHEBI:29108"/>
    </ligand>
</feature>
<feature type="binding site" evidence="1">
    <location>
        <position position="143"/>
    </location>
    <ligand>
        <name>Ca(2+)</name>
        <dbReference type="ChEBI" id="CHEBI:29108"/>
    </ligand>
</feature>
<feature type="disulfide bond" evidence="3">
    <location>
        <begin position="26"/>
        <end position="37"/>
    </location>
</feature>
<feature type="disulfide bond" evidence="3">
    <location>
        <begin position="54"/>
        <end position="154"/>
    </location>
</feature>
<feature type="disulfide bond" evidence="3">
    <location>
        <begin position="129"/>
        <end position="146"/>
    </location>
</feature>
<proteinExistence type="evidence at protein level"/>
<accession>D8VNS6</accession>
<protein>
    <recommendedName>
        <fullName>C-type lectin</fullName>
        <shortName>CTL</shortName>
    </recommendedName>
</protein>